<feature type="chain" id="PRO_1000092004" description="5'/3'-nucleotidase SurE">
    <location>
        <begin position="1"/>
        <end position="253"/>
    </location>
</feature>
<feature type="binding site" evidence="1">
    <location>
        <position position="8"/>
    </location>
    <ligand>
        <name>a divalent metal cation</name>
        <dbReference type="ChEBI" id="CHEBI:60240"/>
    </ligand>
</feature>
<feature type="binding site" evidence="1">
    <location>
        <position position="9"/>
    </location>
    <ligand>
        <name>a divalent metal cation</name>
        <dbReference type="ChEBI" id="CHEBI:60240"/>
    </ligand>
</feature>
<feature type="binding site" evidence="1">
    <location>
        <position position="39"/>
    </location>
    <ligand>
        <name>a divalent metal cation</name>
        <dbReference type="ChEBI" id="CHEBI:60240"/>
    </ligand>
</feature>
<feature type="binding site" evidence="1">
    <location>
        <position position="92"/>
    </location>
    <ligand>
        <name>a divalent metal cation</name>
        <dbReference type="ChEBI" id="CHEBI:60240"/>
    </ligand>
</feature>
<name>SURE_ERWT9</name>
<proteinExistence type="inferred from homology"/>
<accession>B2VG26</accession>
<keyword id="KW-0963">Cytoplasm</keyword>
<keyword id="KW-0378">Hydrolase</keyword>
<keyword id="KW-0479">Metal-binding</keyword>
<keyword id="KW-0547">Nucleotide-binding</keyword>
<keyword id="KW-1185">Reference proteome</keyword>
<gene>
    <name evidence="1" type="primary">surE</name>
    <name type="ordered locus">ETA_26980</name>
</gene>
<sequence length="253" mass="27033">MRILLSNDDGIHAPGIQTLAKSLREFAEVQVVAPDRNRSGASNSLTLETPLRTFNYPNGDIAVQMGTPTDCVYLGVNALMRPMPDIVVSGINAGPNLGDDVIYSGTVAAAMEGRHLGLPALAVSLDGYQHYDTAAAVTCSILKALLREPLRTGRILNINVPDLPLDQIKGIRVTRCGSRHPSSQAIAQQDPRGNTLYWIGPPGEKLDAGPDTDFAAVDEGYVSVTALHVDLTAHAAQQVVSSWLASAEVTREW</sequence>
<organism>
    <name type="scientific">Erwinia tasmaniensis (strain DSM 17950 / CFBP 7177 / CIP 109463 / NCPPB 4357 / Et1/99)</name>
    <dbReference type="NCBI Taxonomy" id="465817"/>
    <lineage>
        <taxon>Bacteria</taxon>
        <taxon>Pseudomonadati</taxon>
        <taxon>Pseudomonadota</taxon>
        <taxon>Gammaproteobacteria</taxon>
        <taxon>Enterobacterales</taxon>
        <taxon>Erwiniaceae</taxon>
        <taxon>Erwinia</taxon>
    </lineage>
</organism>
<reference key="1">
    <citation type="journal article" date="2008" name="Environ. Microbiol.">
        <title>The genome of Erwinia tasmaniensis strain Et1/99, a non-pathogenic bacterium in the genus Erwinia.</title>
        <authorList>
            <person name="Kube M."/>
            <person name="Migdoll A.M."/>
            <person name="Mueller I."/>
            <person name="Kuhl H."/>
            <person name="Beck A."/>
            <person name="Reinhardt R."/>
            <person name="Geider K."/>
        </authorList>
    </citation>
    <scope>NUCLEOTIDE SEQUENCE [LARGE SCALE GENOMIC DNA]</scope>
    <source>
        <strain>DSM 17950 / CFBP 7177 / CIP 109463 / NCPPB 4357 / Et1/99</strain>
    </source>
</reference>
<evidence type="ECO:0000255" key="1">
    <source>
        <dbReference type="HAMAP-Rule" id="MF_00060"/>
    </source>
</evidence>
<dbReference type="EC" id="3.1.3.5" evidence="1"/>
<dbReference type="EC" id="3.1.3.6" evidence="1"/>
<dbReference type="EC" id="3.6.1.11" evidence="1"/>
<dbReference type="EMBL" id="CU468135">
    <property type="protein sequence ID" value="CAO97744.1"/>
    <property type="molecule type" value="Genomic_DNA"/>
</dbReference>
<dbReference type="RefSeq" id="WP_012442402.1">
    <property type="nucleotide sequence ID" value="NC_010694.1"/>
</dbReference>
<dbReference type="SMR" id="B2VG26"/>
<dbReference type="STRING" id="465817.ETA_26980"/>
<dbReference type="KEGG" id="eta:ETA_26980"/>
<dbReference type="eggNOG" id="COG0496">
    <property type="taxonomic scope" value="Bacteria"/>
</dbReference>
<dbReference type="HOGENOM" id="CLU_045192_1_2_6"/>
<dbReference type="OrthoDB" id="9780815at2"/>
<dbReference type="Proteomes" id="UP000001726">
    <property type="component" value="Chromosome"/>
</dbReference>
<dbReference type="GO" id="GO:0005737">
    <property type="term" value="C:cytoplasm"/>
    <property type="evidence" value="ECO:0007669"/>
    <property type="project" value="UniProtKB-SubCell"/>
</dbReference>
<dbReference type="GO" id="GO:0008254">
    <property type="term" value="F:3'-nucleotidase activity"/>
    <property type="evidence" value="ECO:0007669"/>
    <property type="project" value="UniProtKB-UniRule"/>
</dbReference>
<dbReference type="GO" id="GO:0008253">
    <property type="term" value="F:5'-nucleotidase activity"/>
    <property type="evidence" value="ECO:0007669"/>
    <property type="project" value="UniProtKB-UniRule"/>
</dbReference>
<dbReference type="GO" id="GO:0004309">
    <property type="term" value="F:exopolyphosphatase activity"/>
    <property type="evidence" value="ECO:0007669"/>
    <property type="project" value="UniProtKB-UniRule"/>
</dbReference>
<dbReference type="GO" id="GO:0046872">
    <property type="term" value="F:metal ion binding"/>
    <property type="evidence" value="ECO:0007669"/>
    <property type="project" value="UniProtKB-UniRule"/>
</dbReference>
<dbReference type="GO" id="GO:0000166">
    <property type="term" value="F:nucleotide binding"/>
    <property type="evidence" value="ECO:0007669"/>
    <property type="project" value="UniProtKB-KW"/>
</dbReference>
<dbReference type="FunFam" id="3.40.1210.10:FF:000001">
    <property type="entry name" value="5'/3'-nucleotidase SurE"/>
    <property type="match status" value="1"/>
</dbReference>
<dbReference type="Gene3D" id="3.40.1210.10">
    <property type="entry name" value="Survival protein SurE-like phosphatase/nucleotidase"/>
    <property type="match status" value="1"/>
</dbReference>
<dbReference type="HAMAP" id="MF_00060">
    <property type="entry name" value="SurE"/>
    <property type="match status" value="1"/>
</dbReference>
<dbReference type="InterPro" id="IPR030048">
    <property type="entry name" value="SurE"/>
</dbReference>
<dbReference type="InterPro" id="IPR002828">
    <property type="entry name" value="SurE-like_Pase/nucleotidase"/>
</dbReference>
<dbReference type="InterPro" id="IPR036523">
    <property type="entry name" value="SurE-like_sf"/>
</dbReference>
<dbReference type="NCBIfam" id="NF001488">
    <property type="entry name" value="PRK00346.1-1"/>
    <property type="match status" value="1"/>
</dbReference>
<dbReference type="NCBIfam" id="NF001489">
    <property type="entry name" value="PRK00346.1-3"/>
    <property type="match status" value="1"/>
</dbReference>
<dbReference type="NCBIfam" id="NF001490">
    <property type="entry name" value="PRK00346.1-4"/>
    <property type="match status" value="1"/>
</dbReference>
<dbReference type="NCBIfam" id="TIGR00087">
    <property type="entry name" value="surE"/>
    <property type="match status" value="1"/>
</dbReference>
<dbReference type="PANTHER" id="PTHR30457">
    <property type="entry name" value="5'-NUCLEOTIDASE SURE"/>
    <property type="match status" value="1"/>
</dbReference>
<dbReference type="PANTHER" id="PTHR30457:SF12">
    <property type="entry name" value="5'_3'-NUCLEOTIDASE SURE"/>
    <property type="match status" value="1"/>
</dbReference>
<dbReference type="Pfam" id="PF01975">
    <property type="entry name" value="SurE"/>
    <property type="match status" value="1"/>
</dbReference>
<dbReference type="SUPFAM" id="SSF64167">
    <property type="entry name" value="SurE-like"/>
    <property type="match status" value="1"/>
</dbReference>
<protein>
    <recommendedName>
        <fullName evidence="1">5'/3'-nucleotidase SurE</fullName>
        <ecNumber evidence="1">3.1.3.5</ecNumber>
        <ecNumber evidence="1">3.1.3.6</ecNumber>
    </recommendedName>
    <alternativeName>
        <fullName evidence="1">Exopolyphosphatase</fullName>
        <ecNumber evidence="1">3.6.1.11</ecNumber>
    </alternativeName>
    <alternativeName>
        <fullName evidence="1">Nucleoside monophosphate phosphohydrolase</fullName>
    </alternativeName>
</protein>
<comment type="function">
    <text evidence="1">Nucleotidase with a broad substrate specificity as it can dephosphorylate various ribo- and deoxyribonucleoside 5'-monophosphates and ribonucleoside 3'-monophosphates with highest affinity to 3'-AMP. Also hydrolyzes polyphosphate (exopolyphosphatase activity) with the preference for short-chain-length substrates (P20-25). Might be involved in the regulation of dNTP and NTP pools, and in the turnover of 3'-mononucleotides produced by numerous intracellular RNases (T1, T2, and F) during the degradation of various RNAs.</text>
</comment>
<comment type="catalytic activity">
    <reaction evidence="1">
        <text>a ribonucleoside 5'-phosphate + H2O = a ribonucleoside + phosphate</text>
        <dbReference type="Rhea" id="RHEA:12484"/>
        <dbReference type="ChEBI" id="CHEBI:15377"/>
        <dbReference type="ChEBI" id="CHEBI:18254"/>
        <dbReference type="ChEBI" id="CHEBI:43474"/>
        <dbReference type="ChEBI" id="CHEBI:58043"/>
        <dbReference type="EC" id="3.1.3.5"/>
    </reaction>
</comment>
<comment type="catalytic activity">
    <reaction evidence="1">
        <text>a ribonucleoside 3'-phosphate + H2O = a ribonucleoside + phosphate</text>
        <dbReference type="Rhea" id="RHEA:10144"/>
        <dbReference type="ChEBI" id="CHEBI:13197"/>
        <dbReference type="ChEBI" id="CHEBI:15377"/>
        <dbReference type="ChEBI" id="CHEBI:18254"/>
        <dbReference type="ChEBI" id="CHEBI:43474"/>
        <dbReference type="EC" id="3.1.3.6"/>
    </reaction>
</comment>
<comment type="catalytic activity">
    <reaction evidence="1">
        <text>[phosphate](n) + H2O = [phosphate](n-1) + phosphate + H(+)</text>
        <dbReference type="Rhea" id="RHEA:21528"/>
        <dbReference type="Rhea" id="RHEA-COMP:9859"/>
        <dbReference type="Rhea" id="RHEA-COMP:14279"/>
        <dbReference type="ChEBI" id="CHEBI:15377"/>
        <dbReference type="ChEBI" id="CHEBI:15378"/>
        <dbReference type="ChEBI" id="CHEBI:16838"/>
        <dbReference type="ChEBI" id="CHEBI:43474"/>
        <dbReference type="EC" id="3.6.1.11"/>
    </reaction>
</comment>
<comment type="cofactor">
    <cofactor evidence="1">
        <name>a divalent metal cation</name>
        <dbReference type="ChEBI" id="CHEBI:60240"/>
    </cofactor>
    <text evidence="1">Binds 1 divalent metal cation per subunit.</text>
</comment>
<comment type="subcellular location">
    <subcellularLocation>
        <location evidence="1">Cytoplasm</location>
    </subcellularLocation>
</comment>
<comment type="similarity">
    <text evidence="1">Belongs to the SurE nucleotidase family.</text>
</comment>